<sequence length="987" mass="110331">MGPLWFCCLPLALLPLLAAVEETLMDSTTATAELGWMVHPPSGWEEVSGYDENMNTIRTYQVCNVFESSQNNWLRTKYIRRRGAHRIHVEMKFSVRDCSSIPNVPGSCKETFNLYYYESDFDSATKTFPNWMENPWMKVDTIAADERFSQVDLGGRVMKINTEVRSFGPVSKNGFYLAFQDYWGCMSLIAVRVFYRKCPRVIQNGADFQETLSGAESTSLVASRGTCINKAEEVDVPIKQHCNGDGEWLVPIGRCMCRPGYESVANGTVCRGCPSGTFKASQGDEGCVHCPINSRTTSEGATNCVCRNGYYRADADPVDMPCTTIPSAPQSVISSVNETSLMLEWTPPRDSGGREDLVYNIICKSCGSGRGACTRCGDNVQFAPRQLGLTEPRIYISDLLAHTQYTFEIQAVNGVTDQSPFSPQFASVNITTNQAAPSAVSIMHQVSRTVDSITLSWSQPDQPNGVILDYELQYYEKNLSELNSTAVKSPTNTVTVQNLKAGTIYVFQVRARTVAGYGRYSGKMYFQTMTEAEYQTSVQEKLPLIIGSSAAGLVFLIAVVVIIIVCNRRGFERADSEYTDKLQHYTSGHMTPGMKIYIDPFTYEDPNEAVREFAKEIDISCVKIEQVIGAGEFGEVCSGHLKLPGKREIFVAIKTLKSGYTEKQRRDFLSEASIMGQFDHPNVIHLEGVVTKSSPVMIITEFMENGSLDSFLRQNDGQFTVIQLVGMLRGIAAGMKYLADMNYVHRDLAARNTLVNSNLVCKVSDFGLSRFLEDDTSDPTYTSALGGKIPIRWTAPEAIQYRKFTSASDVWSYGIVMWEVMSYGERPYWDMTNQDVINAIEQDYRLPPPMDCPNALHQLMLDCWQKDRNHRPKFGQIVNTLDKMIRNPNSLKAMAPLSSGVNLPLLDRTIPDYTSFNTVDEWLDAIKMSQYKESYASAGFTTFDIVSQMTVEDILRVGVTLAGHQKKILNSIQVMRAQMNQIQSVEV</sequence>
<feature type="signal peptide" evidence="4">
    <location>
        <begin position="1"/>
        <end position="19"/>
    </location>
</feature>
<feature type="chain" id="PRO_0000016830" description="Ephrin type-B receptor 2">
    <location>
        <begin position="20"/>
        <end position="987"/>
    </location>
</feature>
<feature type="chain" id="PRO_0000445967" description="EphB2/CTF1" evidence="3">
    <location>
        <begin position="537"/>
        <end position="987"/>
    </location>
</feature>
<feature type="chain" id="PRO_0000445968" description="EphB2/CTF2" evidence="3">
    <location>
        <begin position="563"/>
        <end position="987"/>
    </location>
</feature>
<feature type="topological domain" description="Extracellular" evidence="4">
    <location>
        <begin position="20"/>
        <end position="544"/>
    </location>
</feature>
<feature type="transmembrane region" description="Helical" evidence="4">
    <location>
        <begin position="545"/>
        <end position="565"/>
    </location>
</feature>
<feature type="topological domain" description="Cytoplasmic" evidence="4">
    <location>
        <begin position="566"/>
        <end position="987"/>
    </location>
</feature>
<feature type="domain" description="Eph LBD" evidence="8">
    <location>
        <begin position="21"/>
        <end position="203"/>
    </location>
</feature>
<feature type="domain" description="Fibronectin type-III 1" evidence="7">
    <location>
        <begin position="325"/>
        <end position="435"/>
    </location>
</feature>
<feature type="domain" description="Fibronectin type-III 2" evidence="7">
    <location>
        <begin position="436"/>
        <end position="531"/>
    </location>
</feature>
<feature type="domain" description="Protein kinase" evidence="5">
    <location>
        <begin position="622"/>
        <end position="885"/>
    </location>
</feature>
<feature type="domain" description="SAM" evidence="6">
    <location>
        <begin position="914"/>
        <end position="978"/>
    </location>
</feature>
<feature type="short sequence motif" description="PDZ-binding" evidence="4">
    <location>
        <begin position="985"/>
        <end position="987"/>
    </location>
</feature>
<feature type="active site" description="Proton acceptor" evidence="5">
    <location>
        <position position="747"/>
    </location>
</feature>
<feature type="binding site" evidence="5">
    <location>
        <begin position="628"/>
        <end position="636"/>
    </location>
    <ligand>
        <name>ATP</name>
        <dbReference type="ChEBI" id="CHEBI:30616"/>
    </ligand>
</feature>
<feature type="binding site" evidence="5">
    <location>
        <position position="654"/>
    </location>
    <ligand>
        <name>ATP</name>
        <dbReference type="ChEBI" id="CHEBI:30616"/>
    </ligand>
</feature>
<feature type="site" description="Cleavage; by a metalloproteinase" evidence="3">
    <location>
        <begin position="536"/>
        <end position="537"/>
    </location>
</feature>
<feature type="site" description="Cleavage; by gamma-secretase/PS1" evidence="3">
    <location>
        <begin position="562"/>
        <end position="563"/>
    </location>
</feature>
<feature type="glycosylation site" description="N-linked (GlcNAc...) asparagine" evidence="4">
    <location>
        <position position="266"/>
    </location>
</feature>
<feature type="glycosylation site" description="N-linked (GlcNAc...) asparagine" evidence="4">
    <location>
        <position position="337"/>
    </location>
</feature>
<feature type="glycosylation site" description="N-linked (GlcNAc...) asparagine" evidence="4">
    <location>
        <position position="429"/>
    </location>
</feature>
<feature type="glycosylation site" description="N-linked (GlcNAc...) asparagine" evidence="4">
    <location>
        <position position="478"/>
    </location>
</feature>
<feature type="glycosylation site" description="N-linked (GlcNAc...) asparagine" evidence="4">
    <location>
        <position position="483"/>
    </location>
</feature>
<feature type="disulfide bond" evidence="1">
    <location>
        <begin position="63"/>
        <end position="185"/>
    </location>
</feature>
<feature type="disulfide bond" evidence="1">
    <location>
        <begin position="98"/>
        <end position="108"/>
    </location>
</feature>
<feature type="cross-link" description="Glycyl lysine isopeptide (Lys-Gly) (interchain with G-Cter in ubiquitin)" evidence="2">
    <location>
        <position position="892"/>
    </location>
</feature>
<dbReference type="EC" id="2.7.10.1"/>
<dbReference type="EMBL" id="X91737">
    <property type="protein sequence ID" value="CAA62862.1"/>
    <property type="molecule type" value="mRNA"/>
</dbReference>
<dbReference type="BMRB" id="Q90344"/>
<dbReference type="SMR" id="Q90344"/>
<dbReference type="GlyCosmos" id="Q90344">
    <property type="glycosylation" value="5 sites, No reported glycans"/>
</dbReference>
<dbReference type="BRENDA" id="2.7.10.1">
    <property type="organism ID" value="1673"/>
</dbReference>
<dbReference type="Proteomes" id="UP000694412">
    <property type="component" value="Unplaced"/>
</dbReference>
<dbReference type="GO" id="GO:0030424">
    <property type="term" value="C:axon"/>
    <property type="evidence" value="ECO:0000250"/>
    <property type="project" value="UniProtKB"/>
</dbReference>
<dbReference type="GO" id="GO:0030425">
    <property type="term" value="C:dendrite"/>
    <property type="evidence" value="ECO:0000250"/>
    <property type="project" value="UniProtKB"/>
</dbReference>
<dbReference type="GO" id="GO:0005886">
    <property type="term" value="C:plasma membrane"/>
    <property type="evidence" value="ECO:0000250"/>
    <property type="project" value="UniProtKB"/>
</dbReference>
<dbReference type="GO" id="GO:0005524">
    <property type="term" value="F:ATP binding"/>
    <property type="evidence" value="ECO:0007669"/>
    <property type="project" value="UniProtKB-KW"/>
</dbReference>
<dbReference type="GO" id="GO:0005005">
    <property type="term" value="F:transmembrane-ephrin receptor activity"/>
    <property type="evidence" value="ECO:0000250"/>
    <property type="project" value="UniProtKB"/>
</dbReference>
<dbReference type="GO" id="GO:0001525">
    <property type="term" value="P:angiogenesis"/>
    <property type="evidence" value="ECO:0000250"/>
    <property type="project" value="UniProtKB"/>
</dbReference>
<dbReference type="GO" id="GO:0007411">
    <property type="term" value="P:axon guidance"/>
    <property type="evidence" value="ECO:0000250"/>
    <property type="project" value="UniProtKB"/>
</dbReference>
<dbReference type="GO" id="GO:0007413">
    <property type="term" value="P:axonal fasciculation"/>
    <property type="evidence" value="ECO:0000250"/>
    <property type="project" value="UniProtKB"/>
</dbReference>
<dbReference type="GO" id="GO:0060996">
    <property type="term" value="P:dendritic spine development"/>
    <property type="evidence" value="ECO:0000250"/>
    <property type="project" value="UniProtKB"/>
</dbReference>
<dbReference type="GO" id="GO:0060997">
    <property type="term" value="P:dendritic spine morphogenesis"/>
    <property type="evidence" value="ECO:0000250"/>
    <property type="project" value="UniProtKB"/>
</dbReference>
<dbReference type="GO" id="GO:0048013">
    <property type="term" value="P:ephrin receptor signaling pathway"/>
    <property type="evidence" value="ECO:0000250"/>
    <property type="project" value="UniProtKB"/>
</dbReference>
<dbReference type="GO" id="GO:0018108">
    <property type="term" value="P:peptidyl-tyrosine phosphorylation"/>
    <property type="evidence" value="ECO:0000250"/>
    <property type="project" value="UniProtKB"/>
</dbReference>
<dbReference type="GO" id="GO:0051965">
    <property type="term" value="P:positive regulation of synapse assembly"/>
    <property type="evidence" value="ECO:0000250"/>
    <property type="project" value="UniProtKB"/>
</dbReference>
<dbReference type="CDD" id="cd10477">
    <property type="entry name" value="EphR_LBD_B2"/>
    <property type="match status" value="1"/>
</dbReference>
<dbReference type="CDD" id="cd00063">
    <property type="entry name" value="FN3"/>
    <property type="match status" value="2"/>
</dbReference>
<dbReference type="CDD" id="cd05065">
    <property type="entry name" value="PTKc_EphR_B"/>
    <property type="match status" value="1"/>
</dbReference>
<dbReference type="CDD" id="cd09552">
    <property type="entry name" value="SAM_EPH-B2"/>
    <property type="match status" value="1"/>
</dbReference>
<dbReference type="CDD" id="cd00185">
    <property type="entry name" value="TNFRSF"/>
    <property type="match status" value="1"/>
</dbReference>
<dbReference type="FunFam" id="2.60.40.10:FF:000041">
    <property type="entry name" value="ephrin type-A receptor 3"/>
    <property type="match status" value="1"/>
</dbReference>
<dbReference type="FunFam" id="1.10.150.50:FF:000001">
    <property type="entry name" value="Ephrin type-A receptor 5"/>
    <property type="match status" value="1"/>
</dbReference>
<dbReference type="FunFam" id="2.10.50.10:FF:000001">
    <property type="entry name" value="Ephrin type-A receptor 5"/>
    <property type="match status" value="1"/>
</dbReference>
<dbReference type="FunFam" id="2.60.40.1770:FF:000001">
    <property type="entry name" value="Ephrin type-A receptor 5"/>
    <property type="match status" value="1"/>
</dbReference>
<dbReference type="FunFam" id="3.30.200.20:FF:000001">
    <property type="entry name" value="Ephrin type-A receptor 5"/>
    <property type="match status" value="1"/>
</dbReference>
<dbReference type="FunFam" id="1.10.510.10:FF:000015">
    <property type="entry name" value="Ephrin type-B receptor 2"/>
    <property type="match status" value="1"/>
</dbReference>
<dbReference type="FunFam" id="2.60.120.260:FF:000004">
    <property type="entry name" value="Ephrin type-B receptor 2"/>
    <property type="match status" value="1"/>
</dbReference>
<dbReference type="FunFam" id="2.60.40.10:FF:000110">
    <property type="entry name" value="Ephrin type-B receptor 2"/>
    <property type="match status" value="1"/>
</dbReference>
<dbReference type="Gene3D" id="2.60.40.1770">
    <property type="entry name" value="ephrin a2 ectodomain"/>
    <property type="match status" value="1"/>
</dbReference>
<dbReference type="Gene3D" id="2.60.120.260">
    <property type="entry name" value="Galactose-binding domain-like"/>
    <property type="match status" value="1"/>
</dbReference>
<dbReference type="Gene3D" id="2.60.40.10">
    <property type="entry name" value="Immunoglobulins"/>
    <property type="match status" value="2"/>
</dbReference>
<dbReference type="Gene3D" id="3.30.200.20">
    <property type="entry name" value="Phosphorylase Kinase, domain 1"/>
    <property type="match status" value="1"/>
</dbReference>
<dbReference type="Gene3D" id="1.10.150.50">
    <property type="entry name" value="Transcription Factor, Ets-1"/>
    <property type="match status" value="1"/>
</dbReference>
<dbReference type="Gene3D" id="1.10.510.10">
    <property type="entry name" value="Transferase(Phosphotransferase) domain 1"/>
    <property type="match status" value="1"/>
</dbReference>
<dbReference type="Gene3D" id="2.10.50.10">
    <property type="entry name" value="Tumor Necrosis Factor Receptor, subunit A, domain 2"/>
    <property type="match status" value="1"/>
</dbReference>
<dbReference type="InterPro" id="IPR027936">
    <property type="entry name" value="Eph_TM"/>
</dbReference>
<dbReference type="InterPro" id="IPR034238">
    <property type="entry name" value="EphB2_rcpt_lig-bd"/>
</dbReference>
<dbReference type="InterPro" id="IPR001090">
    <property type="entry name" value="Ephrin_rcpt_lig-bd_dom"/>
</dbReference>
<dbReference type="InterPro" id="IPR050449">
    <property type="entry name" value="Ephrin_rcpt_TKs"/>
</dbReference>
<dbReference type="InterPro" id="IPR003961">
    <property type="entry name" value="FN3_dom"/>
</dbReference>
<dbReference type="InterPro" id="IPR036116">
    <property type="entry name" value="FN3_sf"/>
</dbReference>
<dbReference type="InterPro" id="IPR008979">
    <property type="entry name" value="Galactose-bd-like_sf"/>
</dbReference>
<dbReference type="InterPro" id="IPR009030">
    <property type="entry name" value="Growth_fac_rcpt_cys_sf"/>
</dbReference>
<dbReference type="InterPro" id="IPR013783">
    <property type="entry name" value="Ig-like_fold"/>
</dbReference>
<dbReference type="InterPro" id="IPR011009">
    <property type="entry name" value="Kinase-like_dom_sf"/>
</dbReference>
<dbReference type="InterPro" id="IPR000719">
    <property type="entry name" value="Prot_kinase_dom"/>
</dbReference>
<dbReference type="InterPro" id="IPR017441">
    <property type="entry name" value="Protein_kinase_ATP_BS"/>
</dbReference>
<dbReference type="InterPro" id="IPR001660">
    <property type="entry name" value="SAM"/>
</dbReference>
<dbReference type="InterPro" id="IPR013761">
    <property type="entry name" value="SAM/pointed_sf"/>
</dbReference>
<dbReference type="InterPro" id="IPR001245">
    <property type="entry name" value="Ser-Thr/Tyr_kinase_cat_dom"/>
</dbReference>
<dbReference type="InterPro" id="IPR011641">
    <property type="entry name" value="Tyr-kin_ephrin_A/B_rcpt-like"/>
</dbReference>
<dbReference type="InterPro" id="IPR020635">
    <property type="entry name" value="Tyr_kinase_cat_dom"/>
</dbReference>
<dbReference type="InterPro" id="IPR016257">
    <property type="entry name" value="Tyr_kinase_ephrin_rcpt"/>
</dbReference>
<dbReference type="InterPro" id="IPR001426">
    <property type="entry name" value="Tyr_kinase_rcpt_V_CS"/>
</dbReference>
<dbReference type="PANTHER" id="PTHR46877">
    <property type="entry name" value="EPH RECEPTOR A5"/>
    <property type="match status" value="1"/>
</dbReference>
<dbReference type="PANTHER" id="PTHR46877:SF11">
    <property type="entry name" value="EPHRIN TYPE-B RECEPTOR 2"/>
    <property type="match status" value="1"/>
</dbReference>
<dbReference type="Pfam" id="PF14575">
    <property type="entry name" value="EphA2_TM"/>
    <property type="match status" value="1"/>
</dbReference>
<dbReference type="Pfam" id="PF01404">
    <property type="entry name" value="Ephrin_lbd"/>
    <property type="match status" value="1"/>
</dbReference>
<dbReference type="Pfam" id="PF07699">
    <property type="entry name" value="Ephrin_rec_like"/>
    <property type="match status" value="1"/>
</dbReference>
<dbReference type="Pfam" id="PF00041">
    <property type="entry name" value="fn3"/>
    <property type="match status" value="2"/>
</dbReference>
<dbReference type="Pfam" id="PF07714">
    <property type="entry name" value="PK_Tyr_Ser-Thr"/>
    <property type="match status" value="1"/>
</dbReference>
<dbReference type="Pfam" id="PF00536">
    <property type="entry name" value="SAM_1"/>
    <property type="match status" value="1"/>
</dbReference>
<dbReference type="PIRSF" id="PIRSF000666">
    <property type="entry name" value="TyrPK_ephrin_receptor"/>
    <property type="match status" value="1"/>
</dbReference>
<dbReference type="PRINTS" id="PR00014">
    <property type="entry name" value="FNTYPEIII"/>
</dbReference>
<dbReference type="PRINTS" id="PR00109">
    <property type="entry name" value="TYRKINASE"/>
</dbReference>
<dbReference type="SMART" id="SM00615">
    <property type="entry name" value="EPH_lbd"/>
    <property type="match status" value="1"/>
</dbReference>
<dbReference type="SMART" id="SM01411">
    <property type="entry name" value="Ephrin_rec_like"/>
    <property type="match status" value="1"/>
</dbReference>
<dbReference type="SMART" id="SM00060">
    <property type="entry name" value="FN3"/>
    <property type="match status" value="2"/>
</dbReference>
<dbReference type="SMART" id="SM00454">
    <property type="entry name" value="SAM"/>
    <property type="match status" value="1"/>
</dbReference>
<dbReference type="SMART" id="SM00219">
    <property type="entry name" value="TyrKc"/>
    <property type="match status" value="1"/>
</dbReference>
<dbReference type="SUPFAM" id="SSF49265">
    <property type="entry name" value="Fibronectin type III"/>
    <property type="match status" value="1"/>
</dbReference>
<dbReference type="SUPFAM" id="SSF49785">
    <property type="entry name" value="Galactose-binding domain-like"/>
    <property type="match status" value="1"/>
</dbReference>
<dbReference type="SUPFAM" id="SSF57184">
    <property type="entry name" value="Growth factor receptor domain"/>
    <property type="match status" value="1"/>
</dbReference>
<dbReference type="SUPFAM" id="SSF56112">
    <property type="entry name" value="Protein kinase-like (PK-like)"/>
    <property type="match status" value="1"/>
</dbReference>
<dbReference type="SUPFAM" id="SSF47769">
    <property type="entry name" value="SAM/Pointed domain"/>
    <property type="match status" value="1"/>
</dbReference>
<dbReference type="PROSITE" id="PS01186">
    <property type="entry name" value="EGF_2"/>
    <property type="match status" value="1"/>
</dbReference>
<dbReference type="PROSITE" id="PS51550">
    <property type="entry name" value="EPH_LBD"/>
    <property type="match status" value="1"/>
</dbReference>
<dbReference type="PROSITE" id="PS50853">
    <property type="entry name" value="FN3"/>
    <property type="match status" value="2"/>
</dbReference>
<dbReference type="PROSITE" id="PS00107">
    <property type="entry name" value="PROTEIN_KINASE_ATP"/>
    <property type="match status" value="1"/>
</dbReference>
<dbReference type="PROSITE" id="PS50011">
    <property type="entry name" value="PROTEIN_KINASE_DOM"/>
    <property type="match status" value="1"/>
</dbReference>
<dbReference type="PROSITE" id="PS00790">
    <property type="entry name" value="RECEPTOR_TYR_KIN_V_1"/>
    <property type="match status" value="1"/>
</dbReference>
<dbReference type="PROSITE" id="PS00791">
    <property type="entry name" value="RECEPTOR_TYR_KIN_V_2"/>
    <property type="match status" value="1"/>
</dbReference>
<dbReference type="PROSITE" id="PS50105">
    <property type="entry name" value="SAM_DOMAIN"/>
    <property type="match status" value="1"/>
</dbReference>
<gene>
    <name type="primary">EPHB2</name>
    <name type="synonym">QEK5</name>
</gene>
<evidence type="ECO:0000250" key="1"/>
<evidence type="ECO:0000250" key="2">
    <source>
        <dbReference type="UniProtKB" id="P29323"/>
    </source>
</evidence>
<evidence type="ECO:0000250" key="3">
    <source>
        <dbReference type="UniProtKB" id="P54763"/>
    </source>
</evidence>
<evidence type="ECO:0000255" key="4"/>
<evidence type="ECO:0000255" key="5">
    <source>
        <dbReference type="PROSITE-ProRule" id="PRU00159"/>
    </source>
</evidence>
<evidence type="ECO:0000255" key="6">
    <source>
        <dbReference type="PROSITE-ProRule" id="PRU00184"/>
    </source>
</evidence>
<evidence type="ECO:0000255" key="7">
    <source>
        <dbReference type="PROSITE-ProRule" id="PRU00316"/>
    </source>
</evidence>
<evidence type="ECO:0000255" key="8">
    <source>
        <dbReference type="PROSITE-ProRule" id="PRU00883"/>
    </source>
</evidence>
<reference key="1">
    <citation type="journal article" date="1995" name="Dev. Biol.">
        <title>The receptor tyrosine kinase QEK5 mRNA is expressed in a gradient within the neural retina and the tectum.</title>
        <authorList>
            <person name="Kenny D."/>
            <person name="Bronner-Fraser M."/>
            <person name="Marcelle C."/>
        </authorList>
    </citation>
    <scope>NUCLEOTIDE SEQUENCE [MRNA]</scope>
    <source>
        <tissue>Embryo</tissue>
    </source>
</reference>
<keyword id="KW-0067">ATP-binding</keyword>
<keyword id="KW-1003">Cell membrane</keyword>
<keyword id="KW-0966">Cell projection</keyword>
<keyword id="KW-0217">Developmental protein</keyword>
<keyword id="KW-1015">Disulfide bond</keyword>
<keyword id="KW-0325">Glycoprotein</keyword>
<keyword id="KW-1017">Isopeptide bond</keyword>
<keyword id="KW-0418">Kinase</keyword>
<keyword id="KW-0472">Membrane</keyword>
<keyword id="KW-0524">Neurogenesis</keyword>
<keyword id="KW-0547">Nucleotide-binding</keyword>
<keyword id="KW-0675">Receptor</keyword>
<keyword id="KW-1185">Reference proteome</keyword>
<keyword id="KW-0677">Repeat</keyword>
<keyword id="KW-0732">Signal</keyword>
<keyword id="KW-0808">Transferase</keyword>
<keyword id="KW-0812">Transmembrane</keyword>
<keyword id="KW-1133">Transmembrane helix</keyword>
<keyword id="KW-0829">Tyrosine-protein kinase</keyword>
<keyword id="KW-0832">Ubl conjugation</keyword>
<proteinExistence type="evidence at transcript level"/>
<organism>
    <name type="scientific">Coturnix japonica</name>
    <name type="common">Japanese quail</name>
    <name type="synonym">Coturnix coturnix japonica</name>
    <dbReference type="NCBI Taxonomy" id="93934"/>
    <lineage>
        <taxon>Eukaryota</taxon>
        <taxon>Metazoa</taxon>
        <taxon>Chordata</taxon>
        <taxon>Craniata</taxon>
        <taxon>Vertebrata</taxon>
        <taxon>Euteleostomi</taxon>
        <taxon>Archelosauria</taxon>
        <taxon>Archosauria</taxon>
        <taxon>Dinosauria</taxon>
        <taxon>Saurischia</taxon>
        <taxon>Theropoda</taxon>
        <taxon>Coelurosauria</taxon>
        <taxon>Aves</taxon>
        <taxon>Neognathae</taxon>
        <taxon>Galloanserae</taxon>
        <taxon>Galliformes</taxon>
        <taxon>Phasianidae</taxon>
        <taxon>Perdicinae</taxon>
        <taxon>Coturnix</taxon>
    </lineage>
</organism>
<protein>
    <recommendedName>
        <fullName>Ephrin type-B receptor 2</fullName>
        <ecNumber>2.7.10.1</ecNumber>
    </recommendedName>
    <alternativeName>
        <fullName>EPH-like kinase 5</fullName>
        <shortName>EK5</shortName>
        <shortName>qEK5</shortName>
    </alternativeName>
    <component>
        <recommendedName>
            <fullName evidence="3">EphB2/CTF1</fullName>
        </recommendedName>
    </component>
    <component>
        <recommendedName>
            <fullName evidence="3">EphB2/CTF2</fullName>
        </recommendedName>
    </component>
</protein>
<comment type="function">
    <text evidence="1">Receptor tyrosine kinase which binds promiscuously transmembrane ephrin-B family ligands residing on adjacent cells, leading to contact-dependent bidirectional signaling into neighboring cells. The signaling pathway downstream of the receptor is referred to as forward signaling while the signaling pathway downstream of the ephrin ligand is referred to as reverse signaling. Functions in axon guidance during development. In addition to axon guidance, also regulates dendritic spines development and maturation and stimulates the formation of excitatory synapses (By similarity).</text>
</comment>
<comment type="catalytic activity">
    <reaction>
        <text>L-tyrosyl-[protein] + ATP = O-phospho-L-tyrosyl-[protein] + ADP + H(+)</text>
        <dbReference type="Rhea" id="RHEA:10596"/>
        <dbReference type="Rhea" id="RHEA-COMP:10136"/>
        <dbReference type="Rhea" id="RHEA-COMP:20101"/>
        <dbReference type="ChEBI" id="CHEBI:15378"/>
        <dbReference type="ChEBI" id="CHEBI:30616"/>
        <dbReference type="ChEBI" id="CHEBI:46858"/>
        <dbReference type="ChEBI" id="CHEBI:61978"/>
        <dbReference type="ChEBI" id="CHEBI:456216"/>
        <dbReference type="EC" id="2.7.10.1"/>
    </reaction>
</comment>
<comment type="subunit">
    <text evidence="1">Heterotetramer upon binding of the ligand. The heterotetramer is composed of an ephrin dimer and a receptor dimer. Oligomerization is probably required to induce biological responses (By similarity).</text>
</comment>
<comment type="subcellular location">
    <subcellularLocation>
        <location evidence="1">Cell membrane</location>
        <topology evidence="1">Single-pass type I membrane protein</topology>
    </subcellularLocation>
    <subcellularLocation>
        <location evidence="1">Cell projection</location>
        <location evidence="1">Axon</location>
    </subcellularLocation>
    <subcellularLocation>
        <location evidence="1">Cell projection</location>
        <location evidence="1">Dendrite</location>
    </subcellularLocation>
</comment>
<comment type="PTM">
    <text evidence="3">Ligand binding induces cleavage by matrix metalloproteinases (MMPs) such as MMP7/MMP9, producing an EphB2/N-terminal fragment (NTF) and a C-terminal long fragment (EphB2-LF). EphB2-LF is further cleaved by MMPs, producing EphB2/CTF1 which is further cleaved by the PS1/gamma-secretase producing EphB2/CTF2.</text>
</comment>
<comment type="PTM">
    <text evidence="2">Polyubiquitinated; ligand binding stimulates ubiquitination. Ubiquitinated by RNF186 at Lys-892, mainly through 'Lys-27'-linked polyubiquitin chains.</text>
</comment>
<comment type="similarity">
    <text evidence="5">Belongs to the protein kinase superfamily. Tyr protein kinase family. Ephrin receptor subfamily.</text>
</comment>
<accession>Q90344</accession>
<name>EPHB2_COTJA</name>